<accession>B1ZN99</accession>
<keyword id="KW-0067">ATP-binding</keyword>
<keyword id="KW-0238">DNA-binding</keyword>
<keyword id="KW-0479">Metal-binding</keyword>
<keyword id="KW-0547">Nucleotide-binding</keyword>
<keyword id="KW-1185">Reference proteome</keyword>
<keyword id="KW-0678">Repressor</keyword>
<keyword id="KW-0804">Transcription</keyword>
<keyword id="KW-0805">Transcription regulation</keyword>
<keyword id="KW-0862">Zinc</keyword>
<keyword id="KW-0863">Zinc-finger</keyword>
<reference key="1">
    <citation type="journal article" date="2011" name="J. Bacteriol.">
        <title>Genome sequence of the verrucomicrobium Opitutus terrae PB90-1, an abundant inhabitant of rice paddy soil ecosystems.</title>
        <authorList>
            <person name="van Passel M.W."/>
            <person name="Kant R."/>
            <person name="Palva A."/>
            <person name="Copeland A."/>
            <person name="Lucas S."/>
            <person name="Lapidus A."/>
            <person name="Glavina del Rio T."/>
            <person name="Pitluck S."/>
            <person name="Goltsman E."/>
            <person name="Clum A."/>
            <person name="Sun H."/>
            <person name="Schmutz J."/>
            <person name="Larimer F.W."/>
            <person name="Land M.L."/>
            <person name="Hauser L."/>
            <person name="Kyrpides N."/>
            <person name="Mikhailova N."/>
            <person name="Richardson P.P."/>
            <person name="Janssen P.H."/>
            <person name="de Vos W.M."/>
            <person name="Smidt H."/>
        </authorList>
    </citation>
    <scope>NUCLEOTIDE SEQUENCE [LARGE SCALE GENOMIC DNA]</scope>
    <source>
        <strain>DSM 11246 / JCM 15787 / PB90-1</strain>
    </source>
</reference>
<feature type="chain" id="PRO_1000124528" description="Transcriptional repressor NrdR">
    <location>
        <begin position="1"/>
        <end position="152"/>
    </location>
</feature>
<feature type="domain" description="ATP-cone" evidence="1">
    <location>
        <begin position="49"/>
        <end position="139"/>
    </location>
</feature>
<feature type="zinc finger region" evidence="1">
    <location>
        <begin position="3"/>
        <end position="34"/>
    </location>
</feature>
<comment type="function">
    <text evidence="1">Negatively regulates transcription of bacterial ribonucleotide reductase nrd genes and operons by binding to NrdR-boxes.</text>
</comment>
<comment type="cofactor">
    <cofactor evidence="1">
        <name>Zn(2+)</name>
        <dbReference type="ChEBI" id="CHEBI:29105"/>
    </cofactor>
    <text evidence="1">Binds 1 zinc ion.</text>
</comment>
<comment type="similarity">
    <text evidence="1">Belongs to the NrdR family.</text>
</comment>
<sequence length="152" mass="17578">MRCPKCTSIEDKVIDSRISKEGSTIRRRRECLECGYRFSTTESLVRDGIVVIKRDGRREEFSRDKLLHAVRAACHKRPVDVEQITMLIEDVIDMLEAHYDSEIPSAAIGDAVMQRLRSMDQVAYVRFASVYKEFRDVSEFMQEISALGKKEK</sequence>
<proteinExistence type="inferred from homology"/>
<name>NRDR_OPITP</name>
<evidence type="ECO:0000255" key="1">
    <source>
        <dbReference type="HAMAP-Rule" id="MF_00440"/>
    </source>
</evidence>
<dbReference type="EMBL" id="CP001032">
    <property type="protein sequence ID" value="ACB73468.1"/>
    <property type="molecule type" value="Genomic_DNA"/>
</dbReference>
<dbReference type="RefSeq" id="WP_012373006.1">
    <property type="nucleotide sequence ID" value="NC_010571.1"/>
</dbReference>
<dbReference type="SMR" id="B1ZN99"/>
<dbReference type="STRING" id="452637.Oter_0177"/>
<dbReference type="KEGG" id="ote:Oter_0177"/>
<dbReference type="eggNOG" id="COG1327">
    <property type="taxonomic scope" value="Bacteria"/>
</dbReference>
<dbReference type="HOGENOM" id="CLU_108412_0_0_0"/>
<dbReference type="OrthoDB" id="9807461at2"/>
<dbReference type="Proteomes" id="UP000007013">
    <property type="component" value="Chromosome"/>
</dbReference>
<dbReference type="GO" id="GO:0005524">
    <property type="term" value="F:ATP binding"/>
    <property type="evidence" value="ECO:0007669"/>
    <property type="project" value="UniProtKB-KW"/>
</dbReference>
<dbReference type="GO" id="GO:0003677">
    <property type="term" value="F:DNA binding"/>
    <property type="evidence" value="ECO:0007669"/>
    <property type="project" value="UniProtKB-KW"/>
</dbReference>
<dbReference type="GO" id="GO:0008270">
    <property type="term" value="F:zinc ion binding"/>
    <property type="evidence" value="ECO:0007669"/>
    <property type="project" value="UniProtKB-UniRule"/>
</dbReference>
<dbReference type="GO" id="GO:0045892">
    <property type="term" value="P:negative regulation of DNA-templated transcription"/>
    <property type="evidence" value="ECO:0007669"/>
    <property type="project" value="UniProtKB-UniRule"/>
</dbReference>
<dbReference type="HAMAP" id="MF_00440">
    <property type="entry name" value="NrdR"/>
    <property type="match status" value="1"/>
</dbReference>
<dbReference type="InterPro" id="IPR005144">
    <property type="entry name" value="ATP-cone_dom"/>
</dbReference>
<dbReference type="InterPro" id="IPR055173">
    <property type="entry name" value="NrdR-like_N"/>
</dbReference>
<dbReference type="InterPro" id="IPR003796">
    <property type="entry name" value="RNR_NrdR-like"/>
</dbReference>
<dbReference type="NCBIfam" id="TIGR00244">
    <property type="entry name" value="transcriptional regulator NrdR"/>
    <property type="match status" value="1"/>
</dbReference>
<dbReference type="PANTHER" id="PTHR30455">
    <property type="entry name" value="TRANSCRIPTIONAL REPRESSOR NRDR"/>
    <property type="match status" value="1"/>
</dbReference>
<dbReference type="PANTHER" id="PTHR30455:SF2">
    <property type="entry name" value="TRANSCRIPTIONAL REPRESSOR NRDR"/>
    <property type="match status" value="1"/>
</dbReference>
<dbReference type="Pfam" id="PF03477">
    <property type="entry name" value="ATP-cone"/>
    <property type="match status" value="1"/>
</dbReference>
<dbReference type="Pfam" id="PF22811">
    <property type="entry name" value="Zn_ribbon_NrdR"/>
    <property type="match status" value="1"/>
</dbReference>
<dbReference type="PROSITE" id="PS51161">
    <property type="entry name" value="ATP_CONE"/>
    <property type="match status" value="1"/>
</dbReference>
<protein>
    <recommendedName>
        <fullName evidence="1">Transcriptional repressor NrdR</fullName>
    </recommendedName>
</protein>
<gene>
    <name evidence="1" type="primary">nrdR</name>
    <name type="ordered locus">Oter_0177</name>
</gene>
<organism>
    <name type="scientific">Opitutus terrae (strain DSM 11246 / JCM 15787 / PB90-1)</name>
    <dbReference type="NCBI Taxonomy" id="452637"/>
    <lineage>
        <taxon>Bacteria</taxon>
        <taxon>Pseudomonadati</taxon>
        <taxon>Verrucomicrobiota</taxon>
        <taxon>Opitutia</taxon>
        <taxon>Opitutales</taxon>
        <taxon>Opitutaceae</taxon>
        <taxon>Opitutus</taxon>
    </lineage>
</organism>